<sequence>MTLGKNKRISKGGKRGKKKAQETMSRKEWYDVVAPKNFEVRQFGKTICNKTQGTKIAADYLRGRVYESNLADLNKTQGDDDAYRKVKFVVQEVQGRNLLTQFHSMEMTSDRVYFLLRKWCTTIEAAVEAKTADGYTLRLFVIAFTKKQSNQLSKNCYAKTRLVKWVRHRITNLIRQRLSKVNINEAVTLLTRNILRDRLAKRCNPIVPLRDLRIRKVKVVRTPRFDAQALLNAHGEIPASAEGEARVVEEAQEAPAAEATA</sequence>
<dbReference type="EMBL" id="AAHK01000084">
    <property type="protein sequence ID" value="EAN97793.1"/>
    <property type="molecule type" value="Genomic_DNA"/>
</dbReference>
<dbReference type="EMBL" id="AAHK01000084">
    <property type="protein sequence ID" value="EAN97794.1"/>
    <property type="molecule type" value="Genomic_DNA"/>
</dbReference>
<dbReference type="RefSeq" id="XP_819644.1">
    <property type="nucleotide sequence ID" value="XM_814551.1"/>
</dbReference>
<dbReference type="RefSeq" id="XP_819645.1">
    <property type="nucleotide sequence ID" value="XM_814552.1"/>
</dbReference>
<dbReference type="PDB" id="5OPT">
    <property type="method" value="EM"/>
    <property type="resolution" value="4.00 A"/>
    <property type="chains" value="W=1-261"/>
</dbReference>
<dbReference type="PDB" id="7ASE">
    <property type="method" value="EM"/>
    <property type="resolution" value="3.33 A"/>
    <property type="chains" value="W=8-261"/>
</dbReference>
<dbReference type="PDBsum" id="5OPT"/>
<dbReference type="PDBsum" id="7ASE"/>
<dbReference type="EMDB" id="EMD-11893"/>
<dbReference type="EMDB" id="EMD-3844"/>
<dbReference type="SMR" id="Q4DZ41"/>
<dbReference type="FunCoup" id="Q4DZ41">
    <property type="interactions" value="626"/>
</dbReference>
<dbReference type="STRING" id="353153.Q4DZ41"/>
<dbReference type="PaxDb" id="353153-Q4DZ41"/>
<dbReference type="EnsemblProtists" id="EAN97793">
    <property type="protein sequence ID" value="EAN97793"/>
    <property type="gene ID" value="Tc00.1047053511001.18"/>
</dbReference>
<dbReference type="EnsemblProtists" id="EAN97794">
    <property type="protein sequence ID" value="EAN97794"/>
    <property type="gene ID" value="Tc00.1047053511001.9"/>
</dbReference>
<dbReference type="GeneID" id="3552123"/>
<dbReference type="GeneID" id="3552124"/>
<dbReference type="KEGG" id="tcr:511001.18"/>
<dbReference type="KEGG" id="tcr:511001.9"/>
<dbReference type="eggNOG" id="KOG1628">
    <property type="taxonomic scope" value="Eukaryota"/>
</dbReference>
<dbReference type="InParanoid" id="Q4DZ41"/>
<dbReference type="OMA" id="HKFIPEM"/>
<dbReference type="Proteomes" id="UP000002296">
    <property type="component" value="Unassembled WGS sequence"/>
</dbReference>
<dbReference type="GO" id="GO:0022627">
    <property type="term" value="C:cytosolic small ribosomal subunit"/>
    <property type="evidence" value="ECO:0007669"/>
    <property type="project" value="UniProtKB-UniRule"/>
</dbReference>
<dbReference type="GO" id="GO:0003735">
    <property type="term" value="F:structural constituent of ribosome"/>
    <property type="evidence" value="ECO:0007669"/>
    <property type="project" value="UniProtKB-UniRule"/>
</dbReference>
<dbReference type="GO" id="GO:0006412">
    <property type="term" value="P:translation"/>
    <property type="evidence" value="ECO:0007669"/>
    <property type="project" value="UniProtKB-UniRule"/>
</dbReference>
<dbReference type="HAMAP" id="MF_03122">
    <property type="entry name" value="Ribosomal_eS1_euk"/>
    <property type="match status" value="1"/>
</dbReference>
<dbReference type="InterPro" id="IPR001593">
    <property type="entry name" value="Ribosomal_eS1"/>
</dbReference>
<dbReference type="InterPro" id="IPR027500">
    <property type="entry name" value="Ribosomal_eS1_euk"/>
</dbReference>
<dbReference type="PANTHER" id="PTHR11830">
    <property type="entry name" value="40S RIBOSOMAL PROTEIN S3A"/>
    <property type="match status" value="1"/>
</dbReference>
<dbReference type="Pfam" id="PF01015">
    <property type="entry name" value="Ribosomal_S3Ae"/>
    <property type="match status" value="1"/>
</dbReference>
<dbReference type="SMART" id="SM01397">
    <property type="entry name" value="Ribosomal_S3Ae"/>
    <property type="match status" value="1"/>
</dbReference>
<reference key="1">
    <citation type="journal article" date="2005" name="Science">
        <title>The genome sequence of Trypanosoma cruzi, etiologic agent of Chagas disease.</title>
        <authorList>
            <person name="El-Sayed N.M.A."/>
            <person name="Myler P.J."/>
            <person name="Bartholomeu D.C."/>
            <person name="Nilsson D."/>
            <person name="Aggarwal G."/>
            <person name="Tran A.-N."/>
            <person name="Ghedin E."/>
            <person name="Worthey E.A."/>
            <person name="Delcher A.L."/>
            <person name="Blandin G."/>
            <person name="Westenberger S.J."/>
            <person name="Caler E."/>
            <person name="Cerqueira G.C."/>
            <person name="Branche C."/>
            <person name="Haas B."/>
            <person name="Anupama A."/>
            <person name="Arner E."/>
            <person name="Aslund L."/>
            <person name="Attipoe P."/>
            <person name="Bontempi E."/>
            <person name="Bringaud F."/>
            <person name="Burton P."/>
            <person name="Cadag E."/>
            <person name="Campbell D.A."/>
            <person name="Carrington M."/>
            <person name="Crabtree J."/>
            <person name="Darban H."/>
            <person name="da Silveira J.F."/>
            <person name="de Jong P."/>
            <person name="Edwards K."/>
            <person name="Englund P.T."/>
            <person name="Fazelina G."/>
            <person name="Feldblyum T."/>
            <person name="Ferella M."/>
            <person name="Frasch A.C."/>
            <person name="Gull K."/>
            <person name="Horn D."/>
            <person name="Hou L."/>
            <person name="Huang Y."/>
            <person name="Kindlund E."/>
            <person name="Klingbeil M."/>
            <person name="Kluge S."/>
            <person name="Koo H."/>
            <person name="Lacerda D."/>
            <person name="Levin M.J."/>
            <person name="Lorenzi H."/>
            <person name="Louie T."/>
            <person name="Machado C.R."/>
            <person name="McCulloch R."/>
            <person name="McKenna A."/>
            <person name="Mizuno Y."/>
            <person name="Mottram J.C."/>
            <person name="Nelson S."/>
            <person name="Ochaya S."/>
            <person name="Osoegawa K."/>
            <person name="Pai G."/>
            <person name="Parsons M."/>
            <person name="Pentony M."/>
            <person name="Pettersson U."/>
            <person name="Pop M."/>
            <person name="Ramirez J.L."/>
            <person name="Rinta J."/>
            <person name="Robertson L."/>
            <person name="Salzberg S.L."/>
            <person name="Sanchez D.O."/>
            <person name="Seyler A."/>
            <person name="Sharma R."/>
            <person name="Shetty J."/>
            <person name="Simpson A.J."/>
            <person name="Sisk E."/>
            <person name="Tammi M.T."/>
            <person name="Tarleton R."/>
            <person name="Teixeira S."/>
            <person name="Van Aken S."/>
            <person name="Vogt C."/>
            <person name="Ward P.N."/>
            <person name="Wickstead B."/>
            <person name="Wortman J."/>
            <person name="White O."/>
            <person name="Fraser C.M."/>
            <person name="Stuart K.D."/>
            <person name="Andersson B."/>
        </authorList>
    </citation>
    <scope>NUCLEOTIDE SEQUENCE [LARGE SCALE GENOMIC DNA]</scope>
    <source>
        <strain>CL Brener</strain>
    </source>
</reference>
<accession>Q4DZ41</accession>
<comment type="subunit">
    <text evidence="1">Component of the small ribosomal subunit. Mature ribosomes consist of a small (40S) and a large (60S) subunit. The 40S subunit contains about 33 different proteins and 1 molecule of RNA (18S). The 60S subunit contains about 49 different proteins and 3 molecules of RNA (25S, 5.8S and 5S).</text>
</comment>
<comment type="subcellular location">
    <subcellularLocation>
        <location evidence="1">Cytoplasm</location>
    </subcellularLocation>
</comment>
<comment type="similarity">
    <text evidence="1">Belongs to the eukaryotic ribosomal protein eS1 family.</text>
</comment>
<evidence type="ECO:0000255" key="1">
    <source>
        <dbReference type="HAMAP-Rule" id="MF_03122"/>
    </source>
</evidence>
<evidence type="ECO:0000256" key="2">
    <source>
        <dbReference type="SAM" id="MobiDB-lite"/>
    </source>
</evidence>
<evidence type="ECO:0000305" key="3"/>
<feature type="initiator methionine" description="Removed" evidence="1">
    <location>
        <position position="1"/>
    </location>
</feature>
<feature type="chain" id="PRO_0000389349" description="Small ribosomal subunit protein eS1B">
    <location>
        <begin position="2"/>
        <end position="261"/>
    </location>
</feature>
<feature type="region of interest" description="Disordered" evidence="2">
    <location>
        <begin position="1"/>
        <end position="23"/>
    </location>
</feature>
<feature type="compositionally biased region" description="Basic residues" evidence="2">
    <location>
        <begin position="1"/>
        <end position="18"/>
    </location>
</feature>
<proteinExistence type="evidence at protein level"/>
<organism>
    <name type="scientific">Trypanosoma cruzi (strain CL Brener)</name>
    <dbReference type="NCBI Taxonomy" id="353153"/>
    <lineage>
        <taxon>Eukaryota</taxon>
        <taxon>Discoba</taxon>
        <taxon>Euglenozoa</taxon>
        <taxon>Kinetoplastea</taxon>
        <taxon>Metakinetoplastina</taxon>
        <taxon>Trypanosomatida</taxon>
        <taxon>Trypanosomatidae</taxon>
        <taxon>Trypanosoma</taxon>
        <taxon>Schizotrypanum</taxon>
    </lineage>
</organism>
<keyword id="KW-0002">3D-structure</keyword>
<keyword id="KW-0963">Cytoplasm</keyword>
<keyword id="KW-1185">Reference proteome</keyword>
<keyword id="KW-0687">Ribonucleoprotein</keyword>
<keyword id="KW-0689">Ribosomal protein</keyword>
<name>RS3A2_TRYCC</name>
<gene>
    <name type="ORF">Tc00.1047053511001.9</name>
</gene>
<gene>
    <name type="ORF">Tc00.1047053511001.18</name>
</gene>
<protein>
    <recommendedName>
        <fullName evidence="1">Small ribosomal subunit protein eS1B</fullName>
    </recommendedName>
    <alternativeName>
        <fullName evidence="3">40S ribosomal protein S3a-2</fullName>
    </alternativeName>
</protein>